<dbReference type="EC" id="2.2.1.7" evidence="1"/>
<dbReference type="EMBL" id="CR378665">
    <property type="protein sequence ID" value="CAG19218.1"/>
    <property type="molecule type" value="Genomic_DNA"/>
</dbReference>
<dbReference type="RefSeq" id="WP_011217557.1">
    <property type="nucleotide sequence ID" value="NC_006370.1"/>
</dbReference>
<dbReference type="SMR" id="Q6LU07"/>
<dbReference type="STRING" id="298386.PBPRA0805"/>
<dbReference type="KEGG" id="ppr:PBPRA0805"/>
<dbReference type="eggNOG" id="COG1154">
    <property type="taxonomic scope" value="Bacteria"/>
</dbReference>
<dbReference type="HOGENOM" id="CLU_009227_1_4_6"/>
<dbReference type="UniPathway" id="UPA00064">
    <property type="reaction ID" value="UER00091"/>
</dbReference>
<dbReference type="Proteomes" id="UP000000593">
    <property type="component" value="Chromosome 1"/>
</dbReference>
<dbReference type="GO" id="GO:0005829">
    <property type="term" value="C:cytosol"/>
    <property type="evidence" value="ECO:0007669"/>
    <property type="project" value="TreeGrafter"/>
</dbReference>
<dbReference type="GO" id="GO:0008661">
    <property type="term" value="F:1-deoxy-D-xylulose-5-phosphate synthase activity"/>
    <property type="evidence" value="ECO:0007669"/>
    <property type="project" value="UniProtKB-UniRule"/>
</dbReference>
<dbReference type="GO" id="GO:0000287">
    <property type="term" value="F:magnesium ion binding"/>
    <property type="evidence" value="ECO:0007669"/>
    <property type="project" value="UniProtKB-UniRule"/>
</dbReference>
<dbReference type="GO" id="GO:0030976">
    <property type="term" value="F:thiamine pyrophosphate binding"/>
    <property type="evidence" value="ECO:0007669"/>
    <property type="project" value="UniProtKB-UniRule"/>
</dbReference>
<dbReference type="GO" id="GO:0052865">
    <property type="term" value="P:1-deoxy-D-xylulose 5-phosphate biosynthetic process"/>
    <property type="evidence" value="ECO:0007669"/>
    <property type="project" value="UniProtKB-UniPathway"/>
</dbReference>
<dbReference type="GO" id="GO:0019288">
    <property type="term" value="P:isopentenyl diphosphate biosynthetic process, methylerythritol 4-phosphate pathway"/>
    <property type="evidence" value="ECO:0007669"/>
    <property type="project" value="TreeGrafter"/>
</dbReference>
<dbReference type="GO" id="GO:0016114">
    <property type="term" value="P:terpenoid biosynthetic process"/>
    <property type="evidence" value="ECO:0007669"/>
    <property type="project" value="UniProtKB-UniRule"/>
</dbReference>
<dbReference type="GO" id="GO:0009228">
    <property type="term" value="P:thiamine biosynthetic process"/>
    <property type="evidence" value="ECO:0007669"/>
    <property type="project" value="UniProtKB-UniRule"/>
</dbReference>
<dbReference type="CDD" id="cd02007">
    <property type="entry name" value="TPP_DXS"/>
    <property type="match status" value="1"/>
</dbReference>
<dbReference type="CDD" id="cd07033">
    <property type="entry name" value="TPP_PYR_DXS_TK_like"/>
    <property type="match status" value="1"/>
</dbReference>
<dbReference type="FunFam" id="3.40.50.920:FF:000002">
    <property type="entry name" value="1-deoxy-D-xylulose-5-phosphate synthase"/>
    <property type="match status" value="1"/>
</dbReference>
<dbReference type="FunFam" id="3.40.50.970:FF:000005">
    <property type="entry name" value="1-deoxy-D-xylulose-5-phosphate synthase"/>
    <property type="match status" value="1"/>
</dbReference>
<dbReference type="Gene3D" id="3.40.50.920">
    <property type="match status" value="1"/>
</dbReference>
<dbReference type="Gene3D" id="3.40.50.970">
    <property type="match status" value="2"/>
</dbReference>
<dbReference type="HAMAP" id="MF_00315">
    <property type="entry name" value="DXP_synth"/>
    <property type="match status" value="1"/>
</dbReference>
<dbReference type="InterPro" id="IPR005477">
    <property type="entry name" value="Dxylulose-5-P_synthase"/>
</dbReference>
<dbReference type="InterPro" id="IPR029061">
    <property type="entry name" value="THDP-binding"/>
</dbReference>
<dbReference type="InterPro" id="IPR009014">
    <property type="entry name" value="Transketo_C/PFOR_II"/>
</dbReference>
<dbReference type="InterPro" id="IPR005475">
    <property type="entry name" value="Transketolase-like_Pyr-bd"/>
</dbReference>
<dbReference type="InterPro" id="IPR020826">
    <property type="entry name" value="Transketolase_BS"/>
</dbReference>
<dbReference type="InterPro" id="IPR033248">
    <property type="entry name" value="Transketolase_C"/>
</dbReference>
<dbReference type="InterPro" id="IPR049557">
    <property type="entry name" value="Transketolase_CS"/>
</dbReference>
<dbReference type="NCBIfam" id="TIGR00204">
    <property type="entry name" value="dxs"/>
    <property type="match status" value="1"/>
</dbReference>
<dbReference type="NCBIfam" id="NF003933">
    <property type="entry name" value="PRK05444.2-2"/>
    <property type="match status" value="1"/>
</dbReference>
<dbReference type="PANTHER" id="PTHR43322">
    <property type="entry name" value="1-D-DEOXYXYLULOSE 5-PHOSPHATE SYNTHASE-RELATED"/>
    <property type="match status" value="1"/>
</dbReference>
<dbReference type="PANTHER" id="PTHR43322:SF5">
    <property type="entry name" value="1-DEOXY-D-XYLULOSE-5-PHOSPHATE SYNTHASE, CHLOROPLASTIC"/>
    <property type="match status" value="1"/>
</dbReference>
<dbReference type="Pfam" id="PF13292">
    <property type="entry name" value="DXP_synthase_N"/>
    <property type="match status" value="1"/>
</dbReference>
<dbReference type="Pfam" id="PF02779">
    <property type="entry name" value="Transket_pyr"/>
    <property type="match status" value="1"/>
</dbReference>
<dbReference type="Pfam" id="PF02780">
    <property type="entry name" value="Transketolase_C"/>
    <property type="match status" value="1"/>
</dbReference>
<dbReference type="SMART" id="SM00861">
    <property type="entry name" value="Transket_pyr"/>
    <property type="match status" value="1"/>
</dbReference>
<dbReference type="SUPFAM" id="SSF52518">
    <property type="entry name" value="Thiamin diphosphate-binding fold (THDP-binding)"/>
    <property type="match status" value="2"/>
</dbReference>
<dbReference type="SUPFAM" id="SSF52922">
    <property type="entry name" value="TK C-terminal domain-like"/>
    <property type="match status" value="1"/>
</dbReference>
<dbReference type="PROSITE" id="PS00801">
    <property type="entry name" value="TRANSKETOLASE_1"/>
    <property type="match status" value="1"/>
</dbReference>
<dbReference type="PROSITE" id="PS00802">
    <property type="entry name" value="TRANSKETOLASE_2"/>
    <property type="match status" value="1"/>
</dbReference>
<proteinExistence type="inferred from homology"/>
<evidence type="ECO:0000255" key="1">
    <source>
        <dbReference type="HAMAP-Rule" id="MF_00315"/>
    </source>
</evidence>
<keyword id="KW-0414">Isoprene biosynthesis</keyword>
<keyword id="KW-0460">Magnesium</keyword>
<keyword id="KW-0479">Metal-binding</keyword>
<keyword id="KW-1185">Reference proteome</keyword>
<keyword id="KW-0784">Thiamine biosynthesis</keyword>
<keyword id="KW-0786">Thiamine pyrophosphate</keyword>
<keyword id="KW-0808">Transferase</keyword>
<organism>
    <name type="scientific">Photobacterium profundum (strain SS9)</name>
    <dbReference type="NCBI Taxonomy" id="298386"/>
    <lineage>
        <taxon>Bacteria</taxon>
        <taxon>Pseudomonadati</taxon>
        <taxon>Pseudomonadota</taxon>
        <taxon>Gammaproteobacteria</taxon>
        <taxon>Vibrionales</taxon>
        <taxon>Vibrionaceae</taxon>
        <taxon>Photobacterium</taxon>
    </lineage>
</organism>
<comment type="function">
    <text evidence="1">Catalyzes the acyloin condensation reaction between C atoms 2 and 3 of pyruvate and glyceraldehyde 3-phosphate to yield 1-deoxy-D-xylulose-5-phosphate (DXP).</text>
</comment>
<comment type="catalytic activity">
    <reaction evidence="1">
        <text>D-glyceraldehyde 3-phosphate + pyruvate + H(+) = 1-deoxy-D-xylulose 5-phosphate + CO2</text>
        <dbReference type="Rhea" id="RHEA:12605"/>
        <dbReference type="ChEBI" id="CHEBI:15361"/>
        <dbReference type="ChEBI" id="CHEBI:15378"/>
        <dbReference type="ChEBI" id="CHEBI:16526"/>
        <dbReference type="ChEBI" id="CHEBI:57792"/>
        <dbReference type="ChEBI" id="CHEBI:59776"/>
        <dbReference type="EC" id="2.2.1.7"/>
    </reaction>
</comment>
<comment type="cofactor">
    <cofactor evidence="1">
        <name>Mg(2+)</name>
        <dbReference type="ChEBI" id="CHEBI:18420"/>
    </cofactor>
    <text evidence="1">Binds 1 Mg(2+) ion per subunit.</text>
</comment>
<comment type="cofactor">
    <cofactor evidence="1">
        <name>thiamine diphosphate</name>
        <dbReference type="ChEBI" id="CHEBI:58937"/>
    </cofactor>
    <text evidence="1">Binds 1 thiamine pyrophosphate per subunit.</text>
</comment>
<comment type="pathway">
    <text evidence="1">Metabolic intermediate biosynthesis; 1-deoxy-D-xylulose 5-phosphate biosynthesis; 1-deoxy-D-xylulose 5-phosphate from D-glyceraldehyde 3-phosphate and pyruvate: step 1/1.</text>
</comment>
<comment type="subunit">
    <text evidence="1">Homodimer.</text>
</comment>
<comment type="similarity">
    <text evidence="1">Belongs to the transketolase family. DXPS subfamily.</text>
</comment>
<name>DXS_PHOPR</name>
<accession>Q6LU07</accession>
<protein>
    <recommendedName>
        <fullName evidence="1">1-deoxy-D-xylulose-5-phosphate synthase</fullName>
        <ecNumber evidence="1">2.2.1.7</ecNumber>
    </recommendedName>
    <alternativeName>
        <fullName evidence="1">1-deoxyxylulose-5-phosphate synthase</fullName>
        <shortName evidence="1">DXP synthase</shortName>
        <shortName evidence="1">DXPS</shortName>
    </alternativeName>
</protein>
<feature type="chain" id="PRO_0000256453" description="1-deoxy-D-xylulose-5-phosphate synthase">
    <location>
        <begin position="1"/>
        <end position="620"/>
    </location>
</feature>
<feature type="binding site" evidence="1">
    <location>
        <position position="80"/>
    </location>
    <ligand>
        <name>thiamine diphosphate</name>
        <dbReference type="ChEBI" id="CHEBI:58937"/>
    </ligand>
</feature>
<feature type="binding site" evidence="1">
    <location>
        <begin position="121"/>
        <end position="123"/>
    </location>
    <ligand>
        <name>thiamine diphosphate</name>
        <dbReference type="ChEBI" id="CHEBI:58937"/>
    </ligand>
</feature>
<feature type="binding site" evidence="1">
    <location>
        <position position="152"/>
    </location>
    <ligand>
        <name>Mg(2+)</name>
        <dbReference type="ChEBI" id="CHEBI:18420"/>
    </ligand>
</feature>
<feature type="binding site" evidence="1">
    <location>
        <begin position="153"/>
        <end position="154"/>
    </location>
    <ligand>
        <name>thiamine diphosphate</name>
        <dbReference type="ChEBI" id="CHEBI:58937"/>
    </ligand>
</feature>
<feature type="binding site" evidence="1">
    <location>
        <position position="181"/>
    </location>
    <ligand>
        <name>Mg(2+)</name>
        <dbReference type="ChEBI" id="CHEBI:18420"/>
    </ligand>
</feature>
<feature type="binding site" evidence="1">
    <location>
        <position position="181"/>
    </location>
    <ligand>
        <name>thiamine diphosphate</name>
        <dbReference type="ChEBI" id="CHEBI:58937"/>
    </ligand>
</feature>
<feature type="binding site" evidence="1">
    <location>
        <position position="288"/>
    </location>
    <ligand>
        <name>thiamine diphosphate</name>
        <dbReference type="ChEBI" id="CHEBI:58937"/>
    </ligand>
</feature>
<feature type="binding site" evidence="1">
    <location>
        <position position="370"/>
    </location>
    <ligand>
        <name>thiamine diphosphate</name>
        <dbReference type="ChEBI" id="CHEBI:58937"/>
    </ligand>
</feature>
<gene>
    <name evidence="1" type="primary">dxs</name>
    <name type="ordered locus">PBPRA0805</name>
</gene>
<sequence length="620" mass="67622">MTLDISKYPHLALANTPDELRLLPVESLPEVCDELRTYLLNSVSQSSGHFASGLGAVELTVALHHVYNTPFDHLIWDVGHQAYPHKILTGRRDQMSTIRQKDGIHPFPWRGESEYDVLSVGHSSTSISAGLGMAIAANKEGLGRKVVSVIGDGAITAGMAFEAMNHAGDVHSDMLVILNDNEMSISENVGALNNHLARLLSGSLYTTIREGGKKVLAGAPPIKELVKRAEEHIKGMVVPGTMFEELGFNYIGPVDGHDVTELVKTLKNMRNLKGPQFLHIMTKKGKGYAPAEADPINYHAVPKFDLSQNPLPKAANAKPTFSKIFGDWLCDMAAEDEKLMAITPAMREGSGMVRFSKEYPSQYFDVAIAEQHAVTLASGMAIGGYNPIVAIYSTFLQRGYDQLIHDVAIMELPVMFAIDRGGLVGADGQTHQGAFDLSFMRCIPNIVIMAPSDENECRQMLYTGHKHQGPSAVRYPRGNGLGAEIQKEMTALEIGKGIIRRQGEKIAILNFGTMLEYALEAAEKLNATVADMRFVKPLDEELILELAANHDVLVTVEENAIAGGAGSGVIEFMMKSKCLKPVLNIGLPDRFVEQGTQQELHTALEIDAAGIEKKIRDYIA</sequence>
<reference key="1">
    <citation type="journal article" date="2005" name="Science">
        <title>Life at depth: Photobacterium profundum genome sequence and expression analysis.</title>
        <authorList>
            <person name="Vezzi A."/>
            <person name="Campanaro S."/>
            <person name="D'Angelo M."/>
            <person name="Simonato F."/>
            <person name="Vitulo N."/>
            <person name="Lauro F.M."/>
            <person name="Cestaro A."/>
            <person name="Malacrida G."/>
            <person name="Simionati B."/>
            <person name="Cannata N."/>
            <person name="Romualdi C."/>
            <person name="Bartlett D.H."/>
            <person name="Valle G."/>
        </authorList>
    </citation>
    <scope>NUCLEOTIDE SEQUENCE [LARGE SCALE GENOMIC DNA]</scope>
    <source>
        <strain>ATCC BAA-1253 / SS9</strain>
    </source>
</reference>